<feature type="chain" id="PRO_0000253546" description="EF-hand calcium-binding domain-containing protein 3">
    <location>
        <begin position="1"/>
        <end position="438"/>
    </location>
</feature>
<feature type="domain" description="EF-hand 1" evidence="2">
    <location>
        <begin position="47"/>
        <end position="82"/>
    </location>
</feature>
<feature type="domain" description="EF-hand 2" evidence="2">
    <location>
        <begin position="83"/>
        <end position="118"/>
    </location>
</feature>
<feature type="region of interest" description="Disordered" evidence="3">
    <location>
        <begin position="413"/>
        <end position="438"/>
    </location>
</feature>
<feature type="compositionally biased region" description="Basic residues" evidence="3">
    <location>
        <begin position="426"/>
        <end position="438"/>
    </location>
</feature>
<feature type="binding site" evidence="2">
    <location>
        <position position="96"/>
    </location>
    <ligand>
        <name>Ca(2+)</name>
        <dbReference type="ChEBI" id="CHEBI:29108"/>
    </ligand>
</feature>
<feature type="binding site" evidence="2">
    <location>
        <position position="98"/>
    </location>
    <ligand>
        <name>Ca(2+)</name>
        <dbReference type="ChEBI" id="CHEBI:29108"/>
    </ligand>
</feature>
<feature type="binding site" evidence="2">
    <location>
        <position position="100"/>
    </location>
    <ligand>
        <name>Ca(2+)</name>
        <dbReference type="ChEBI" id="CHEBI:29108"/>
    </ligand>
</feature>
<feature type="binding site" evidence="2">
    <location>
        <position position="102"/>
    </location>
    <ligand>
        <name>Ca(2+)</name>
        <dbReference type="ChEBI" id="CHEBI:29108"/>
    </ligand>
</feature>
<feature type="binding site" evidence="2">
    <location>
        <position position="107"/>
    </location>
    <ligand>
        <name>Ca(2+)</name>
        <dbReference type="ChEBI" id="CHEBI:29108"/>
    </ligand>
</feature>
<feature type="modified residue" description="Phosphotyrosine" evidence="1">
    <location>
        <position position="279"/>
    </location>
</feature>
<accession>Q2T9P0</accession>
<organism>
    <name type="scientific">Bos taurus</name>
    <name type="common">Bovine</name>
    <dbReference type="NCBI Taxonomy" id="9913"/>
    <lineage>
        <taxon>Eukaryota</taxon>
        <taxon>Metazoa</taxon>
        <taxon>Chordata</taxon>
        <taxon>Craniata</taxon>
        <taxon>Vertebrata</taxon>
        <taxon>Euteleostomi</taxon>
        <taxon>Mammalia</taxon>
        <taxon>Eutheria</taxon>
        <taxon>Laurasiatheria</taxon>
        <taxon>Artiodactyla</taxon>
        <taxon>Ruminantia</taxon>
        <taxon>Pecora</taxon>
        <taxon>Bovidae</taxon>
        <taxon>Bovinae</taxon>
        <taxon>Bos</taxon>
    </lineage>
</organism>
<gene>
    <name type="primary">EFCAB3</name>
</gene>
<proteinExistence type="evidence at protein level"/>
<evidence type="ECO:0000250" key="1">
    <source>
        <dbReference type="UniProtKB" id="Q66HC0"/>
    </source>
</evidence>
<evidence type="ECO:0000255" key="2">
    <source>
        <dbReference type="PROSITE-ProRule" id="PRU00448"/>
    </source>
</evidence>
<evidence type="ECO:0000256" key="3">
    <source>
        <dbReference type="SAM" id="MobiDB-lite"/>
    </source>
</evidence>
<sequence>MAVSEIKAKFKLNPLTKVPNFHSRRDKDLPGLLPCQLQHKERKLSPSQMRAFQDAYNFFNKDKTGCIDLHGMMCTLAKLGMNLTKHDVHNELRCADIDQDGKVNFSDFLKVLTDKNRFLKAVVPEKGTCLDLAGNPGILLFEILSKLIETSALPKKAISEIVSYFRRKFQETTSGMVWSPDTTGYGKRRFKPDICTPPSSSTAAFANAARIAIMKEKDLFKFLDELKKCNPPSDSPYSKIPIFPLFPNVDGVVMGKPFKDIQKLEMLKRKEPLNFFENYFFHKKDWKTQEANIKPVDPTSGYTTDILTIDQMLKRKQNWTVADAAAIKPHVKRATETYNLGIALEHRKQMLNLWRKIRGDLIGIESKNESFYDTFSTYTWSWNVCQELLSPKDLKLYDAHVNRNALHNSVFSSSSDISECDTDTGRKRKRKGFKGFRQ</sequence>
<name>EFCB3_BOVIN</name>
<reference key="1">
    <citation type="submission" date="2005-12" db="EMBL/GenBank/DDBJ databases">
        <authorList>
            <consortium name="NIH - Mammalian Gene Collection (MGC) project"/>
        </authorList>
    </citation>
    <scope>NUCLEOTIDE SEQUENCE [LARGE SCALE MRNA]</scope>
    <source>
        <strain>Crossbred X Angus</strain>
        <tissue>Liver</tissue>
    </source>
</reference>
<protein>
    <recommendedName>
        <fullName>EF-hand calcium-binding domain-containing protein 3</fullName>
    </recommendedName>
</protein>
<keyword id="KW-0002">3D-structure</keyword>
<keyword id="KW-0106">Calcium</keyword>
<keyword id="KW-0479">Metal-binding</keyword>
<keyword id="KW-0597">Phosphoprotein</keyword>
<keyword id="KW-1185">Reference proteome</keyword>
<keyword id="KW-0677">Repeat</keyword>
<dbReference type="EMBL" id="BC111336">
    <property type="protein sequence ID" value="AAI11337.1"/>
    <property type="molecule type" value="mRNA"/>
</dbReference>
<dbReference type="RefSeq" id="NP_001033230.1">
    <property type="nucleotide sequence ID" value="NM_001038141.2"/>
</dbReference>
<dbReference type="PDB" id="8OTZ">
    <property type="method" value="EM"/>
    <property type="resolution" value="3.60 A"/>
    <property type="chains" value="u/v/w=1-438"/>
</dbReference>
<dbReference type="PDBsum" id="8OTZ"/>
<dbReference type="EMDB" id="EMD-17187"/>
<dbReference type="EMDB" id="EMD-50664"/>
<dbReference type="SMR" id="Q2T9P0"/>
<dbReference type="STRING" id="9913.ENSBTAP00000009115"/>
<dbReference type="PaxDb" id="9913-ENSBTAP00000009115"/>
<dbReference type="GeneID" id="524320"/>
<dbReference type="KEGG" id="bta:524320"/>
<dbReference type="CTD" id="146779"/>
<dbReference type="eggNOG" id="KOG0027">
    <property type="taxonomic scope" value="Eukaryota"/>
</dbReference>
<dbReference type="InParanoid" id="Q2T9P0"/>
<dbReference type="OrthoDB" id="26525at2759"/>
<dbReference type="Proteomes" id="UP000009136">
    <property type="component" value="Unplaced"/>
</dbReference>
<dbReference type="GO" id="GO:0005509">
    <property type="term" value="F:calcium ion binding"/>
    <property type="evidence" value="ECO:0007669"/>
    <property type="project" value="InterPro"/>
</dbReference>
<dbReference type="CDD" id="cd00051">
    <property type="entry name" value="EFh"/>
    <property type="match status" value="1"/>
</dbReference>
<dbReference type="Gene3D" id="1.10.238.10">
    <property type="entry name" value="EF-hand"/>
    <property type="match status" value="1"/>
</dbReference>
<dbReference type="InterPro" id="IPR011992">
    <property type="entry name" value="EF-hand-dom_pair"/>
</dbReference>
<dbReference type="InterPro" id="IPR018247">
    <property type="entry name" value="EF_Hand_1_Ca_BS"/>
</dbReference>
<dbReference type="InterPro" id="IPR002048">
    <property type="entry name" value="EF_hand_dom"/>
</dbReference>
<dbReference type="PANTHER" id="PTHR22656">
    <property type="entry name" value="EF-HAND CALCIUM-BINDING DOMAIN-CONTAINING PROTEIN 13"/>
    <property type="match status" value="1"/>
</dbReference>
<dbReference type="PANTHER" id="PTHR22656:SF1">
    <property type="entry name" value="EF-HAND CALCIUM-BINDING DOMAIN-CONTAINING PROTEIN 13"/>
    <property type="match status" value="1"/>
</dbReference>
<dbReference type="Pfam" id="PF13833">
    <property type="entry name" value="EF-hand_8"/>
    <property type="match status" value="1"/>
</dbReference>
<dbReference type="SUPFAM" id="SSF47473">
    <property type="entry name" value="EF-hand"/>
    <property type="match status" value="1"/>
</dbReference>
<dbReference type="PROSITE" id="PS00018">
    <property type="entry name" value="EF_HAND_1"/>
    <property type="match status" value="1"/>
</dbReference>
<dbReference type="PROSITE" id="PS50222">
    <property type="entry name" value="EF_HAND_2"/>
    <property type="match status" value="2"/>
</dbReference>